<reference key="1">
    <citation type="journal article" date="2006" name="Plant Cell Rep.">
        <title>Complete sequence and organization of the cucumber (Cucumis sativus L. cv. Baekmibaekdadagi) chloroplast genome.</title>
        <authorList>
            <person name="Kim J.-S."/>
            <person name="Jung J.D."/>
            <person name="Lee J.-A."/>
            <person name="Park H.-W."/>
            <person name="Oh K.-H."/>
            <person name="Jeong W.J."/>
            <person name="Choi D.-W."/>
            <person name="Liu J.R."/>
            <person name="Cho K.Y."/>
        </authorList>
    </citation>
    <scope>NUCLEOTIDE SEQUENCE [LARGE SCALE GENOMIC DNA]</scope>
    <source>
        <strain>cv. Baekmibaekdadagi</strain>
    </source>
</reference>
<reference key="2">
    <citation type="journal article" date="2007" name="Cell. Mol. Biol. Lett.">
        <title>The complete structure of the cucumber (Cucumis sativus L.) chloroplast genome: its composition and comparative analysis.</title>
        <authorList>
            <person name="Plader W.W."/>
            <person name="Yukawa Y."/>
            <person name="Sugiura M."/>
            <person name="Malepszy S."/>
        </authorList>
    </citation>
    <scope>NUCLEOTIDE SEQUENCE [LARGE SCALE GENOMIC DNA]</scope>
    <source>
        <strain>cv. Borszczagowski</strain>
    </source>
</reference>
<reference key="3">
    <citation type="journal article" date="2007" name="Genome">
        <title>Sequencing cucumber (Cucumis sativus L.) chloroplast genomes identifies differences between chilling-tolerant and -susceptible cucumber lines.</title>
        <authorList>
            <person name="Chung S.-M."/>
            <person name="Gordon V.S."/>
            <person name="Staub J.E."/>
        </authorList>
    </citation>
    <scope>NUCLEOTIDE SEQUENCE [LARGE SCALE GENOMIC DNA]</scope>
    <source>
        <strain>cv. Chipper</strain>
        <strain>cv. Gy14</strain>
    </source>
</reference>
<organism>
    <name type="scientific">Cucumis sativus</name>
    <name type="common">Cucumber</name>
    <dbReference type="NCBI Taxonomy" id="3659"/>
    <lineage>
        <taxon>Eukaryota</taxon>
        <taxon>Viridiplantae</taxon>
        <taxon>Streptophyta</taxon>
        <taxon>Embryophyta</taxon>
        <taxon>Tracheophyta</taxon>
        <taxon>Spermatophyta</taxon>
        <taxon>Magnoliopsida</taxon>
        <taxon>eudicotyledons</taxon>
        <taxon>Gunneridae</taxon>
        <taxon>Pentapetalae</taxon>
        <taxon>rosids</taxon>
        <taxon>fabids</taxon>
        <taxon>Cucurbitales</taxon>
        <taxon>Cucurbitaceae</taxon>
        <taxon>Benincaseae</taxon>
        <taxon>Cucumis</taxon>
    </lineage>
</organism>
<name>YCF4_CUCSA</name>
<dbReference type="EMBL" id="DQ119058">
    <property type="protein sequence ID" value="AAZ94662.1"/>
    <property type="molecule type" value="Genomic_DNA"/>
</dbReference>
<dbReference type="EMBL" id="AJ970307">
    <property type="protein sequence ID" value="CAJ00769.1"/>
    <property type="molecule type" value="Genomic_DNA"/>
</dbReference>
<dbReference type="EMBL" id="DQ865975">
    <property type="protein sequence ID" value="ABI97428.1"/>
    <property type="molecule type" value="Genomic_DNA"/>
</dbReference>
<dbReference type="EMBL" id="DQ865976">
    <property type="protein sequence ID" value="ABI98756.1"/>
    <property type="molecule type" value="Genomic_DNA"/>
</dbReference>
<dbReference type="RefSeq" id="YP_247610.1">
    <property type="nucleotide sequence ID" value="NC_007144.1"/>
</dbReference>
<dbReference type="GeneID" id="3429361"/>
<dbReference type="KEGG" id="csv:3429361"/>
<dbReference type="eggNOG" id="ENOG502QWGG">
    <property type="taxonomic scope" value="Eukaryota"/>
</dbReference>
<dbReference type="OrthoDB" id="1927442at2759"/>
<dbReference type="GO" id="GO:0009535">
    <property type="term" value="C:chloroplast thylakoid membrane"/>
    <property type="evidence" value="ECO:0007669"/>
    <property type="project" value="UniProtKB-SubCell"/>
</dbReference>
<dbReference type="GO" id="GO:0009522">
    <property type="term" value="C:photosystem I"/>
    <property type="evidence" value="ECO:0007669"/>
    <property type="project" value="InterPro"/>
</dbReference>
<dbReference type="GO" id="GO:0015979">
    <property type="term" value="P:photosynthesis"/>
    <property type="evidence" value="ECO:0007669"/>
    <property type="project" value="UniProtKB-UniRule"/>
</dbReference>
<dbReference type="HAMAP" id="MF_00437">
    <property type="entry name" value="Ycf4"/>
    <property type="match status" value="1"/>
</dbReference>
<dbReference type="InterPro" id="IPR003359">
    <property type="entry name" value="PSI_Ycf4_assembly"/>
</dbReference>
<dbReference type="PANTHER" id="PTHR33288">
    <property type="match status" value="1"/>
</dbReference>
<dbReference type="PANTHER" id="PTHR33288:SF4">
    <property type="entry name" value="PHOTOSYSTEM I ASSEMBLY PROTEIN YCF4"/>
    <property type="match status" value="1"/>
</dbReference>
<dbReference type="Pfam" id="PF02392">
    <property type="entry name" value="Ycf4"/>
    <property type="match status" value="1"/>
</dbReference>
<geneLocation type="chloroplast"/>
<proteinExistence type="inferred from homology"/>
<accession>Q2QD78</accession>
<accession>A5J1U5</accession>
<accession>Q4VZI1</accession>
<gene>
    <name evidence="1" type="primary">ycf4</name>
    <name type="ordered locus">CsCp051</name>
</gene>
<keyword id="KW-0150">Chloroplast</keyword>
<keyword id="KW-0472">Membrane</keyword>
<keyword id="KW-0602">Photosynthesis</keyword>
<keyword id="KW-0934">Plastid</keyword>
<keyword id="KW-0793">Thylakoid</keyword>
<keyword id="KW-0812">Transmembrane</keyword>
<keyword id="KW-1133">Transmembrane helix</keyword>
<comment type="function">
    <text evidence="1">Seems to be required for the assembly of the photosystem I complex.</text>
</comment>
<comment type="subcellular location">
    <subcellularLocation>
        <location evidence="1">Plastid</location>
        <location evidence="1">Chloroplast thylakoid membrane</location>
        <topology evidence="1">Multi-pass membrane protein</topology>
    </subcellularLocation>
</comment>
<comment type="similarity">
    <text evidence="1">Belongs to the Ycf4 family.</text>
</comment>
<protein>
    <recommendedName>
        <fullName evidence="1">Photosystem I assembly protein Ycf4</fullName>
    </recommendedName>
</protein>
<sequence length="184" mass="21647">MNWRSERIWIEFLRGSRKISNFCWAFILFLGSLGFLLVGTSSYLGRDLISLFPSQQIIFFPQGIVMSFYGIAGLFISSYLWCTILWNVGSGYDRFDRKEEIVSIFRWGFPGKNRRIFLRFLMKDIQSIRIEVKEGIYARRVLYMEIRGQGAIPLTRTDQNLTPREIEQKAAELAYFLRVPIEVF</sequence>
<feature type="chain" id="PRO_0000275651" description="Photosystem I assembly protein Ycf4">
    <location>
        <begin position="1"/>
        <end position="184"/>
    </location>
</feature>
<feature type="transmembrane region" description="Helical" evidence="1">
    <location>
        <begin position="19"/>
        <end position="39"/>
    </location>
</feature>
<feature type="transmembrane region" description="Helical" evidence="1">
    <location>
        <begin position="57"/>
        <end position="77"/>
    </location>
</feature>
<feature type="sequence conflict" description="In Ref. 2; CAJ00769." evidence="2" ref="2">
    <original>NWRSERIWIE</original>
    <variation>TLAIRTYMIG</variation>
    <location>
        <begin position="2"/>
        <end position="11"/>
    </location>
</feature>
<feature type="sequence conflict" description="In Ref. 2; CAJ00769." evidence="2" ref="2">
    <original>S</original>
    <variation>P</variation>
    <location>
        <position position="50"/>
    </location>
</feature>
<feature type="sequence conflict" description="In Ref. 2; CAJ00769." evidence="2" ref="2">
    <original>C</original>
    <variation>G</variation>
    <location>
        <position position="82"/>
    </location>
</feature>
<evidence type="ECO:0000255" key="1">
    <source>
        <dbReference type="HAMAP-Rule" id="MF_00437"/>
    </source>
</evidence>
<evidence type="ECO:0000305" key="2"/>